<protein>
    <recommendedName>
        <fullName evidence="1">Xanthine-guanine phosphoribosyltransferase</fullName>
        <shortName evidence="1">XGPRT</shortName>
        <ecNumber evidence="1">2.4.2.-</ecNumber>
        <ecNumber evidence="1">2.4.2.22</ecNumber>
    </recommendedName>
    <alternativeName>
        <fullName evidence="1">Xanthine phosphoribosyltransferase</fullName>
    </alternativeName>
</protein>
<proteinExistence type="inferred from homology"/>
<gene>
    <name evidence="1" type="primary">gpt</name>
    <name type="ordered locus">DVU_1066</name>
</gene>
<accession>Q72D63</accession>
<dbReference type="EC" id="2.4.2.-" evidence="1"/>
<dbReference type="EC" id="2.4.2.22" evidence="1"/>
<dbReference type="EMBL" id="AE017285">
    <property type="protein sequence ID" value="AAS95546.1"/>
    <property type="molecule type" value="Genomic_DNA"/>
</dbReference>
<dbReference type="RefSeq" id="WP_010938365.1">
    <property type="nucleotide sequence ID" value="NC_002937.3"/>
</dbReference>
<dbReference type="RefSeq" id="YP_010287.1">
    <property type="nucleotide sequence ID" value="NC_002937.3"/>
</dbReference>
<dbReference type="SMR" id="Q72D63"/>
<dbReference type="STRING" id="882.DVU_1066"/>
<dbReference type="PaxDb" id="882-DVU_1066"/>
<dbReference type="EnsemblBacteria" id="AAS95546">
    <property type="protein sequence ID" value="AAS95546"/>
    <property type="gene ID" value="DVU_1066"/>
</dbReference>
<dbReference type="KEGG" id="dvu:DVU_1066"/>
<dbReference type="PATRIC" id="fig|882.5.peg.1004"/>
<dbReference type="eggNOG" id="COG2236">
    <property type="taxonomic scope" value="Bacteria"/>
</dbReference>
<dbReference type="HOGENOM" id="CLU_080904_3_0_7"/>
<dbReference type="OrthoDB" id="9789690at2"/>
<dbReference type="PhylomeDB" id="Q72D63"/>
<dbReference type="UniPathway" id="UPA00602">
    <property type="reaction ID" value="UER00658"/>
</dbReference>
<dbReference type="UniPathway" id="UPA00909">
    <property type="reaction ID" value="UER00887"/>
</dbReference>
<dbReference type="Proteomes" id="UP000002194">
    <property type="component" value="Chromosome"/>
</dbReference>
<dbReference type="GO" id="GO:0005886">
    <property type="term" value="C:plasma membrane"/>
    <property type="evidence" value="ECO:0007669"/>
    <property type="project" value="UniProtKB-SubCell"/>
</dbReference>
<dbReference type="GO" id="GO:0052657">
    <property type="term" value="F:guanine phosphoribosyltransferase activity"/>
    <property type="evidence" value="ECO:0007669"/>
    <property type="project" value="RHEA"/>
</dbReference>
<dbReference type="GO" id="GO:0004422">
    <property type="term" value="F:hypoxanthine phosphoribosyltransferase activity"/>
    <property type="evidence" value="ECO:0007669"/>
    <property type="project" value="RHEA"/>
</dbReference>
<dbReference type="GO" id="GO:0046872">
    <property type="term" value="F:metal ion binding"/>
    <property type="evidence" value="ECO:0007669"/>
    <property type="project" value="UniProtKB-KW"/>
</dbReference>
<dbReference type="GO" id="GO:0000310">
    <property type="term" value="F:xanthine phosphoribosyltransferase activity"/>
    <property type="evidence" value="ECO:0007669"/>
    <property type="project" value="UniProtKB-EC"/>
</dbReference>
<dbReference type="GO" id="GO:0032263">
    <property type="term" value="P:GMP salvage"/>
    <property type="evidence" value="ECO:0007669"/>
    <property type="project" value="UniProtKB-UniPathway"/>
</dbReference>
<dbReference type="GO" id="GO:0006166">
    <property type="term" value="P:purine ribonucleoside salvage"/>
    <property type="evidence" value="ECO:0007669"/>
    <property type="project" value="UniProtKB-KW"/>
</dbReference>
<dbReference type="GO" id="GO:0032265">
    <property type="term" value="P:XMP salvage"/>
    <property type="evidence" value="ECO:0007669"/>
    <property type="project" value="UniProtKB-UniPathway"/>
</dbReference>
<dbReference type="CDD" id="cd06223">
    <property type="entry name" value="PRTases_typeI"/>
    <property type="match status" value="1"/>
</dbReference>
<dbReference type="Gene3D" id="3.40.50.2020">
    <property type="match status" value="1"/>
</dbReference>
<dbReference type="HAMAP" id="MF_01903">
    <property type="entry name" value="XGPRT"/>
    <property type="match status" value="1"/>
</dbReference>
<dbReference type="InterPro" id="IPR000836">
    <property type="entry name" value="PRibTrfase_dom"/>
</dbReference>
<dbReference type="InterPro" id="IPR029057">
    <property type="entry name" value="PRTase-like"/>
</dbReference>
<dbReference type="InterPro" id="IPR023747">
    <property type="entry name" value="Xanthine_Guanine_PRibTrfase"/>
</dbReference>
<dbReference type="NCBIfam" id="NF006613">
    <property type="entry name" value="PRK09177.1"/>
    <property type="match status" value="1"/>
</dbReference>
<dbReference type="PANTHER" id="PTHR39563">
    <property type="entry name" value="XANTHINE PHOSPHORIBOSYLTRANSFERASE"/>
    <property type="match status" value="1"/>
</dbReference>
<dbReference type="PANTHER" id="PTHR39563:SF1">
    <property type="entry name" value="XANTHINE-GUANINE PHOSPHORIBOSYLTRANSFERASE"/>
    <property type="match status" value="1"/>
</dbReference>
<dbReference type="Pfam" id="PF00156">
    <property type="entry name" value="Pribosyltran"/>
    <property type="match status" value="1"/>
</dbReference>
<dbReference type="SUPFAM" id="SSF53271">
    <property type="entry name" value="PRTase-like"/>
    <property type="match status" value="1"/>
</dbReference>
<comment type="function">
    <text evidence="1">Purine salvage pathway enzyme that catalyzes the transfer of the ribosyl-5-phosphate group from 5-phospho-alpha-D-ribose 1-diphosphate (PRPP) to the N9 position of the 6-oxopurines guanine and xanthine to form the corresponding ribonucleotides GMP (guanosine 5'-monophosphate) and XMP (xanthosine 5'-monophosphate), with the release of PPi. To a lesser extent, also acts on hypoxanthine.</text>
</comment>
<comment type="catalytic activity">
    <reaction evidence="1">
        <text>GMP + diphosphate = guanine + 5-phospho-alpha-D-ribose 1-diphosphate</text>
        <dbReference type="Rhea" id="RHEA:25424"/>
        <dbReference type="ChEBI" id="CHEBI:16235"/>
        <dbReference type="ChEBI" id="CHEBI:33019"/>
        <dbReference type="ChEBI" id="CHEBI:58017"/>
        <dbReference type="ChEBI" id="CHEBI:58115"/>
    </reaction>
    <physiologicalReaction direction="right-to-left" evidence="1">
        <dbReference type="Rhea" id="RHEA:25426"/>
    </physiologicalReaction>
</comment>
<comment type="catalytic activity">
    <reaction evidence="1">
        <text>XMP + diphosphate = xanthine + 5-phospho-alpha-D-ribose 1-diphosphate</text>
        <dbReference type="Rhea" id="RHEA:10800"/>
        <dbReference type="ChEBI" id="CHEBI:17712"/>
        <dbReference type="ChEBI" id="CHEBI:33019"/>
        <dbReference type="ChEBI" id="CHEBI:57464"/>
        <dbReference type="ChEBI" id="CHEBI:58017"/>
        <dbReference type="EC" id="2.4.2.22"/>
    </reaction>
    <physiologicalReaction direction="right-to-left" evidence="1">
        <dbReference type="Rhea" id="RHEA:10802"/>
    </physiologicalReaction>
</comment>
<comment type="catalytic activity">
    <reaction evidence="1">
        <text>IMP + diphosphate = hypoxanthine + 5-phospho-alpha-D-ribose 1-diphosphate</text>
        <dbReference type="Rhea" id="RHEA:17973"/>
        <dbReference type="ChEBI" id="CHEBI:17368"/>
        <dbReference type="ChEBI" id="CHEBI:33019"/>
        <dbReference type="ChEBI" id="CHEBI:58017"/>
        <dbReference type="ChEBI" id="CHEBI:58053"/>
    </reaction>
    <physiologicalReaction direction="right-to-left" evidence="1">
        <dbReference type="Rhea" id="RHEA:17975"/>
    </physiologicalReaction>
</comment>
<comment type="cofactor">
    <cofactor evidence="1">
        <name>Mg(2+)</name>
        <dbReference type="ChEBI" id="CHEBI:18420"/>
    </cofactor>
</comment>
<comment type="pathway">
    <text evidence="1">Purine metabolism; GMP biosynthesis via salvage pathway; GMP from guanine: step 1/1.</text>
</comment>
<comment type="pathway">
    <text evidence="1">Purine metabolism; XMP biosynthesis via salvage pathway; XMP from xanthine: step 1/1.</text>
</comment>
<comment type="subunit">
    <text evidence="1">Homotetramer.</text>
</comment>
<comment type="subcellular location">
    <subcellularLocation>
        <location evidence="1">Cell inner membrane</location>
        <topology evidence="1">Peripheral membrane protein</topology>
    </subcellularLocation>
</comment>
<comment type="similarity">
    <text evidence="1">Belongs to the purine/pyrimidine phosphoribosyltransferase family. XGPT subfamily.</text>
</comment>
<sequence length="163" mass="18401">MSTADRYRKVFPVTWEQLHRDAKALSWRLLEKGPYKGIIAIARGGLVPAAVIARELDIHLVETICISSYQWQEQTSSHKVLKTVEGRGEGWLIIDDLADTGGTARLVREMLPEAHFATVYAKPAGRPLVDTFITEVSQDTWILFPWDSEVQYVVPLVNQPQQS</sequence>
<evidence type="ECO:0000255" key="1">
    <source>
        <dbReference type="HAMAP-Rule" id="MF_01903"/>
    </source>
</evidence>
<reference key="1">
    <citation type="journal article" date="2004" name="Nat. Biotechnol.">
        <title>The genome sequence of the anaerobic, sulfate-reducing bacterium Desulfovibrio vulgaris Hildenborough.</title>
        <authorList>
            <person name="Heidelberg J.F."/>
            <person name="Seshadri R."/>
            <person name="Haveman S.A."/>
            <person name="Hemme C.L."/>
            <person name="Paulsen I.T."/>
            <person name="Kolonay J.F."/>
            <person name="Eisen J.A."/>
            <person name="Ward N.L."/>
            <person name="Methe B.A."/>
            <person name="Brinkac L.M."/>
            <person name="Daugherty S.C."/>
            <person name="DeBoy R.T."/>
            <person name="Dodson R.J."/>
            <person name="Durkin A.S."/>
            <person name="Madupu R."/>
            <person name="Nelson W.C."/>
            <person name="Sullivan S.A."/>
            <person name="Fouts D.E."/>
            <person name="Haft D.H."/>
            <person name="Selengut J."/>
            <person name="Peterson J.D."/>
            <person name="Davidsen T.M."/>
            <person name="Zafar N."/>
            <person name="Zhou L."/>
            <person name="Radune D."/>
            <person name="Dimitrov G."/>
            <person name="Hance M."/>
            <person name="Tran K."/>
            <person name="Khouri H.M."/>
            <person name="Gill J."/>
            <person name="Utterback T.R."/>
            <person name="Feldblyum T.V."/>
            <person name="Wall J.D."/>
            <person name="Voordouw G."/>
            <person name="Fraser C.M."/>
        </authorList>
    </citation>
    <scope>NUCLEOTIDE SEQUENCE [LARGE SCALE GENOMIC DNA]</scope>
    <source>
        <strain>ATCC 29579 / DSM 644 / CCUG 34227 / NCIMB 8303 / VKM B-1760 / Hildenborough</strain>
    </source>
</reference>
<name>XGPT_NITV2</name>
<keyword id="KW-0997">Cell inner membrane</keyword>
<keyword id="KW-1003">Cell membrane</keyword>
<keyword id="KW-0328">Glycosyltransferase</keyword>
<keyword id="KW-0460">Magnesium</keyword>
<keyword id="KW-0472">Membrane</keyword>
<keyword id="KW-0479">Metal-binding</keyword>
<keyword id="KW-0660">Purine salvage</keyword>
<keyword id="KW-1185">Reference proteome</keyword>
<keyword id="KW-0808">Transferase</keyword>
<organism>
    <name type="scientific">Nitratidesulfovibrio vulgaris (strain ATCC 29579 / DSM 644 / CCUG 34227 / NCIMB 8303 / VKM B-1760 / Hildenborough)</name>
    <name type="common">Desulfovibrio vulgaris</name>
    <dbReference type="NCBI Taxonomy" id="882"/>
    <lineage>
        <taxon>Bacteria</taxon>
        <taxon>Pseudomonadati</taxon>
        <taxon>Thermodesulfobacteriota</taxon>
        <taxon>Desulfovibrionia</taxon>
        <taxon>Desulfovibrionales</taxon>
        <taxon>Desulfovibrionaceae</taxon>
        <taxon>Nitratidesulfovibrio</taxon>
    </lineage>
</organism>
<feature type="chain" id="PRO_0000139664" description="Xanthine-guanine phosphoribosyltransferase">
    <location>
        <begin position="1"/>
        <end position="163"/>
    </location>
</feature>
<feature type="binding site" evidence="1">
    <location>
        <begin position="43"/>
        <end position="44"/>
    </location>
    <ligand>
        <name>5-phospho-alpha-D-ribose 1-diphosphate</name>
        <dbReference type="ChEBI" id="CHEBI:58017"/>
    </ligand>
</feature>
<feature type="binding site" evidence="1">
    <location>
        <begin position="95"/>
        <end position="103"/>
    </location>
    <ligand>
        <name>5-phospho-alpha-D-ribose 1-diphosphate</name>
        <dbReference type="ChEBI" id="CHEBI:58017"/>
    </ligand>
</feature>
<feature type="binding site" evidence="1">
    <location>
        <position position="96"/>
    </location>
    <ligand>
        <name>Mg(2+)</name>
        <dbReference type="ChEBI" id="CHEBI:18420"/>
    </ligand>
</feature>
<feature type="binding site" evidence="1">
    <location>
        <begin position="99"/>
        <end position="103"/>
    </location>
    <ligand>
        <name>GMP</name>
        <dbReference type="ChEBI" id="CHEBI:58115"/>
    </ligand>
</feature>
<feature type="binding site" evidence="1">
    <location>
        <position position="99"/>
    </location>
    <ligand>
        <name>guanine</name>
        <dbReference type="ChEBI" id="CHEBI:16235"/>
    </ligand>
</feature>
<feature type="binding site" evidence="1">
    <location>
        <position position="99"/>
    </location>
    <ligand>
        <name>xanthine</name>
        <dbReference type="ChEBI" id="CHEBI:17712"/>
    </ligand>
</feature>
<feature type="binding site" evidence="1">
    <location>
        <begin position="141"/>
        <end position="142"/>
    </location>
    <ligand>
        <name>GMP</name>
        <dbReference type="ChEBI" id="CHEBI:58115"/>
    </ligand>
</feature>
<feature type="binding site" evidence="1">
    <location>
        <position position="142"/>
    </location>
    <ligand>
        <name>guanine</name>
        <dbReference type="ChEBI" id="CHEBI:16235"/>
    </ligand>
</feature>
<feature type="binding site" evidence="1">
    <location>
        <position position="142"/>
    </location>
    <ligand>
        <name>xanthine</name>
        <dbReference type="ChEBI" id="CHEBI:17712"/>
    </ligand>
</feature>